<dbReference type="EMBL" id="X70356">
    <property type="protein sequence ID" value="CAA49820.1"/>
    <property type="molecule type" value="Genomic_DNA"/>
</dbReference>
<dbReference type="EMBL" id="D50453">
    <property type="protein sequence ID" value="BAA08987.1"/>
    <property type="molecule type" value="Genomic_DNA"/>
</dbReference>
<dbReference type="EMBL" id="AL009126">
    <property type="protein sequence ID" value="CAB12147.2"/>
    <property type="molecule type" value="Genomic_DNA"/>
</dbReference>
<dbReference type="PIR" id="I40489">
    <property type="entry name" value="I40489"/>
</dbReference>
<dbReference type="RefSeq" id="WP_003246562.1">
    <property type="nucleotide sequence ID" value="NZ_OZ025638.1"/>
</dbReference>
<dbReference type="SMR" id="Q08791"/>
<dbReference type="FunCoup" id="Q08791">
    <property type="interactions" value="135"/>
</dbReference>
<dbReference type="STRING" id="224308.BSU03530"/>
<dbReference type="TCDB" id="2.A.1.11.5">
    <property type="family name" value="the major facilitator superfamily (mfs)"/>
</dbReference>
<dbReference type="PaxDb" id="224308-BSU03530"/>
<dbReference type="EnsemblBacteria" id="CAB12147">
    <property type="protein sequence ID" value="CAB12147"/>
    <property type="gene ID" value="BSU_03530"/>
</dbReference>
<dbReference type="GeneID" id="938307"/>
<dbReference type="KEGG" id="bsu:BSU03530"/>
<dbReference type="PATRIC" id="fig|224308.179.peg.370"/>
<dbReference type="eggNOG" id="COG2814">
    <property type="taxonomic scope" value="Bacteria"/>
</dbReference>
<dbReference type="InParanoid" id="Q08791"/>
<dbReference type="OrthoDB" id="182417at2"/>
<dbReference type="PhylomeDB" id="Q08791"/>
<dbReference type="BioCyc" id="BSUB:BSU03530-MONOMER"/>
<dbReference type="Proteomes" id="UP000001570">
    <property type="component" value="Chromosome"/>
</dbReference>
<dbReference type="GO" id="GO:0005886">
    <property type="term" value="C:plasma membrane"/>
    <property type="evidence" value="ECO:0000318"/>
    <property type="project" value="GO_Central"/>
</dbReference>
<dbReference type="GO" id="GO:0022857">
    <property type="term" value="F:transmembrane transporter activity"/>
    <property type="evidence" value="ECO:0000318"/>
    <property type="project" value="GO_Central"/>
</dbReference>
<dbReference type="CDD" id="cd17314">
    <property type="entry name" value="MFS_MCT_like"/>
    <property type="match status" value="1"/>
</dbReference>
<dbReference type="Gene3D" id="1.20.1250.20">
    <property type="entry name" value="MFS general substrate transporter like domains"/>
    <property type="match status" value="2"/>
</dbReference>
<dbReference type="InterPro" id="IPR011701">
    <property type="entry name" value="MFS"/>
</dbReference>
<dbReference type="InterPro" id="IPR020846">
    <property type="entry name" value="MFS_dom"/>
</dbReference>
<dbReference type="InterPro" id="IPR036259">
    <property type="entry name" value="MFS_trans_sf"/>
</dbReference>
<dbReference type="InterPro" id="IPR050327">
    <property type="entry name" value="Proton-linked_MCT"/>
</dbReference>
<dbReference type="PANTHER" id="PTHR11360:SF284">
    <property type="entry name" value="EG:103B4.3 PROTEIN-RELATED"/>
    <property type="match status" value="1"/>
</dbReference>
<dbReference type="PANTHER" id="PTHR11360">
    <property type="entry name" value="MONOCARBOXYLATE TRANSPORTER"/>
    <property type="match status" value="1"/>
</dbReference>
<dbReference type="Pfam" id="PF07690">
    <property type="entry name" value="MFS_1"/>
    <property type="match status" value="1"/>
</dbReference>
<dbReference type="SUPFAM" id="SSF103473">
    <property type="entry name" value="MFS general substrate transporter"/>
    <property type="match status" value="1"/>
</dbReference>
<dbReference type="PROSITE" id="PS50850">
    <property type="entry name" value="MFS"/>
    <property type="match status" value="1"/>
</dbReference>
<feature type="chain" id="PRO_0000049484" description="Uncharacterized MFS-type transporter YcxA">
    <location>
        <begin position="1"/>
        <end position="408"/>
    </location>
</feature>
<feature type="transmembrane region" description="Helical" evidence="1">
    <location>
        <begin position="9"/>
        <end position="29"/>
    </location>
</feature>
<feature type="transmembrane region" description="Helical" evidence="1">
    <location>
        <begin position="49"/>
        <end position="69"/>
    </location>
</feature>
<feature type="transmembrane region" description="Helical" evidence="1">
    <location>
        <begin position="77"/>
        <end position="97"/>
    </location>
</feature>
<feature type="transmembrane region" description="Helical" evidence="1">
    <location>
        <begin position="100"/>
        <end position="120"/>
    </location>
</feature>
<feature type="transmembrane region" description="Helical" evidence="1">
    <location>
        <begin position="135"/>
        <end position="155"/>
    </location>
</feature>
<feature type="transmembrane region" description="Helical" evidence="1">
    <location>
        <begin position="167"/>
        <end position="187"/>
    </location>
</feature>
<feature type="transmembrane region" description="Helical" evidence="1">
    <location>
        <begin position="216"/>
        <end position="236"/>
    </location>
</feature>
<feature type="transmembrane region" description="Helical" evidence="1">
    <location>
        <begin position="252"/>
        <end position="272"/>
    </location>
</feature>
<feature type="transmembrane region" description="Helical" evidence="1">
    <location>
        <begin position="283"/>
        <end position="303"/>
    </location>
</feature>
<feature type="transmembrane region" description="Helical" evidence="1">
    <location>
        <begin position="308"/>
        <end position="328"/>
    </location>
</feature>
<feature type="transmembrane region" description="Helical" evidence="1">
    <location>
        <begin position="340"/>
        <end position="360"/>
    </location>
</feature>
<feature type="transmembrane region" description="Helical" evidence="1">
    <location>
        <begin position="373"/>
        <end position="393"/>
    </location>
</feature>
<feature type="sequence conflict" description="In Ref. 1; CAA49820 and 2; BAA08987." evidence="2" ref="1 2">
    <original>M</original>
    <variation>S</variation>
    <location>
        <position position="7"/>
    </location>
</feature>
<feature type="sequence conflict" description="In Ref. 1; CAA49820 and 2; BAA08987." evidence="2" ref="1 2">
    <original>L</original>
    <variation>F</variation>
    <location>
        <position position="12"/>
    </location>
</feature>
<feature type="sequence conflict" description="In Ref. 1; CAA49820 and 2; BAA08987." evidence="2" ref="1 2">
    <original>LLLS</original>
    <variation>VVSPP</variation>
    <location>
        <begin position="149"/>
        <end position="152"/>
    </location>
</feature>
<feature type="sequence conflict" description="In Ref. 1; CAA49820 and 2; BAA08987." evidence="2" ref="1 2">
    <original>L</original>
    <variation>V</variation>
    <location>
        <position position="180"/>
    </location>
</feature>
<reference key="1">
    <citation type="journal article" date="1993" name="Mol. Microbiol.">
        <title>Sequence and analysis of the genetic locus responsible for surfactin synthesis in Bacillus subtilis.</title>
        <authorList>
            <person name="Cosmina P."/>
            <person name="Rodriguez F."/>
            <person name="de Ferra F."/>
            <person name="Grandi G."/>
            <person name="Perego M."/>
            <person name="Venema G."/>
            <person name="van Sinderen D."/>
        </authorList>
    </citation>
    <scope>NUCLEOTIDE SEQUENCE [GENOMIC DNA]</scope>
    <source>
        <strain>168 / JH642</strain>
    </source>
</reference>
<reference key="2">
    <citation type="journal article" date="1996" name="Microbiology">
        <title>The 25 degrees-36 degrees region of the Bacillus subtilis chromosome: determination of the sequence of a 146 kb segment and identification of 113 genes.</title>
        <authorList>
            <person name="Yamane K."/>
            <person name="Kumano M."/>
            <person name="Kurita K."/>
        </authorList>
    </citation>
    <scope>NUCLEOTIDE SEQUENCE [GENOMIC DNA]</scope>
    <source>
        <strain>168</strain>
    </source>
</reference>
<reference key="3">
    <citation type="journal article" date="1997" name="Nature">
        <title>The complete genome sequence of the Gram-positive bacterium Bacillus subtilis.</title>
        <authorList>
            <person name="Kunst F."/>
            <person name="Ogasawara N."/>
            <person name="Moszer I."/>
            <person name="Albertini A.M."/>
            <person name="Alloni G."/>
            <person name="Azevedo V."/>
            <person name="Bertero M.G."/>
            <person name="Bessieres P."/>
            <person name="Bolotin A."/>
            <person name="Borchert S."/>
            <person name="Borriss R."/>
            <person name="Boursier L."/>
            <person name="Brans A."/>
            <person name="Braun M."/>
            <person name="Brignell S.C."/>
            <person name="Bron S."/>
            <person name="Brouillet S."/>
            <person name="Bruschi C.V."/>
            <person name="Caldwell B."/>
            <person name="Capuano V."/>
            <person name="Carter N.M."/>
            <person name="Choi S.-K."/>
            <person name="Codani J.-J."/>
            <person name="Connerton I.F."/>
            <person name="Cummings N.J."/>
            <person name="Daniel R.A."/>
            <person name="Denizot F."/>
            <person name="Devine K.M."/>
            <person name="Duesterhoeft A."/>
            <person name="Ehrlich S.D."/>
            <person name="Emmerson P.T."/>
            <person name="Entian K.-D."/>
            <person name="Errington J."/>
            <person name="Fabret C."/>
            <person name="Ferrari E."/>
            <person name="Foulger D."/>
            <person name="Fritz C."/>
            <person name="Fujita M."/>
            <person name="Fujita Y."/>
            <person name="Fuma S."/>
            <person name="Galizzi A."/>
            <person name="Galleron N."/>
            <person name="Ghim S.-Y."/>
            <person name="Glaser P."/>
            <person name="Goffeau A."/>
            <person name="Golightly E.J."/>
            <person name="Grandi G."/>
            <person name="Guiseppi G."/>
            <person name="Guy B.J."/>
            <person name="Haga K."/>
            <person name="Haiech J."/>
            <person name="Harwood C.R."/>
            <person name="Henaut A."/>
            <person name="Hilbert H."/>
            <person name="Holsappel S."/>
            <person name="Hosono S."/>
            <person name="Hullo M.-F."/>
            <person name="Itaya M."/>
            <person name="Jones L.-M."/>
            <person name="Joris B."/>
            <person name="Karamata D."/>
            <person name="Kasahara Y."/>
            <person name="Klaerr-Blanchard M."/>
            <person name="Klein C."/>
            <person name="Kobayashi Y."/>
            <person name="Koetter P."/>
            <person name="Koningstein G."/>
            <person name="Krogh S."/>
            <person name="Kumano M."/>
            <person name="Kurita K."/>
            <person name="Lapidus A."/>
            <person name="Lardinois S."/>
            <person name="Lauber J."/>
            <person name="Lazarevic V."/>
            <person name="Lee S.-M."/>
            <person name="Levine A."/>
            <person name="Liu H."/>
            <person name="Masuda S."/>
            <person name="Mauel C."/>
            <person name="Medigue C."/>
            <person name="Medina N."/>
            <person name="Mellado R.P."/>
            <person name="Mizuno M."/>
            <person name="Moestl D."/>
            <person name="Nakai S."/>
            <person name="Noback M."/>
            <person name="Noone D."/>
            <person name="O'Reilly M."/>
            <person name="Ogawa K."/>
            <person name="Ogiwara A."/>
            <person name="Oudega B."/>
            <person name="Park S.-H."/>
            <person name="Parro V."/>
            <person name="Pohl T.M."/>
            <person name="Portetelle D."/>
            <person name="Porwollik S."/>
            <person name="Prescott A.M."/>
            <person name="Presecan E."/>
            <person name="Pujic P."/>
            <person name="Purnelle B."/>
            <person name="Rapoport G."/>
            <person name="Rey M."/>
            <person name="Reynolds S."/>
            <person name="Rieger M."/>
            <person name="Rivolta C."/>
            <person name="Rocha E."/>
            <person name="Roche B."/>
            <person name="Rose M."/>
            <person name="Sadaie Y."/>
            <person name="Sato T."/>
            <person name="Scanlan E."/>
            <person name="Schleich S."/>
            <person name="Schroeter R."/>
            <person name="Scoffone F."/>
            <person name="Sekiguchi J."/>
            <person name="Sekowska A."/>
            <person name="Seror S.J."/>
            <person name="Serror P."/>
            <person name="Shin B.-S."/>
            <person name="Soldo B."/>
            <person name="Sorokin A."/>
            <person name="Tacconi E."/>
            <person name="Takagi T."/>
            <person name="Takahashi H."/>
            <person name="Takemaru K."/>
            <person name="Takeuchi M."/>
            <person name="Tamakoshi A."/>
            <person name="Tanaka T."/>
            <person name="Terpstra P."/>
            <person name="Tognoni A."/>
            <person name="Tosato V."/>
            <person name="Uchiyama S."/>
            <person name="Vandenbol M."/>
            <person name="Vannier F."/>
            <person name="Vassarotti A."/>
            <person name="Viari A."/>
            <person name="Wambutt R."/>
            <person name="Wedler E."/>
            <person name="Wedler H."/>
            <person name="Weitzenegger T."/>
            <person name="Winters P."/>
            <person name="Wipat A."/>
            <person name="Yamamoto H."/>
            <person name="Yamane K."/>
            <person name="Yasumoto K."/>
            <person name="Yata K."/>
            <person name="Yoshida K."/>
            <person name="Yoshikawa H.-F."/>
            <person name="Zumstein E."/>
            <person name="Yoshikawa H."/>
            <person name="Danchin A."/>
        </authorList>
    </citation>
    <scope>NUCLEOTIDE SEQUENCE [LARGE SCALE GENOMIC DNA]</scope>
    <source>
        <strain>168</strain>
    </source>
</reference>
<reference key="4">
    <citation type="journal article" date="2009" name="Microbiology">
        <title>From a consortium sequence to a unified sequence: the Bacillus subtilis 168 reference genome a decade later.</title>
        <authorList>
            <person name="Barbe V."/>
            <person name="Cruveiller S."/>
            <person name="Kunst F."/>
            <person name="Lenoble P."/>
            <person name="Meurice G."/>
            <person name="Sekowska A."/>
            <person name="Vallenet D."/>
            <person name="Wang T."/>
            <person name="Moszer I."/>
            <person name="Medigue C."/>
            <person name="Danchin A."/>
        </authorList>
    </citation>
    <scope>SEQUENCE REVISION TO 7; 12; 149-152 AND 180</scope>
</reference>
<evidence type="ECO:0000255" key="1"/>
<evidence type="ECO:0000305" key="2"/>
<gene>
    <name type="primary">ycxA</name>
    <name type="ordered locus">BSU03530</name>
</gene>
<organism>
    <name type="scientific">Bacillus subtilis (strain 168)</name>
    <dbReference type="NCBI Taxonomy" id="224308"/>
    <lineage>
        <taxon>Bacteria</taxon>
        <taxon>Bacillati</taxon>
        <taxon>Bacillota</taxon>
        <taxon>Bacilli</taxon>
        <taxon>Bacillales</taxon>
        <taxon>Bacillaceae</taxon>
        <taxon>Bacillus</taxon>
    </lineage>
</organism>
<sequence>MRTSPRMKWFVLLFTFVFAIGMNSFRNSFQFFMLPMADAFHADRSLISVSVSIFMITTGIVQFFVGFFIDRFSVRKIMALGAVCISASFLVLPYSPNVHVFSAIYGVLGGIGYSCAVGVTTQYFISCWFDTHKGLALAILTNANSAGLLLLSPIWAAAPYHAGWQSTYTILGIVMAAVLLPLLVFGMKHPPHAQAETVKKSYDWRGFWNVMKQSRLIHILYFGVFTCGFTMGIIDAHLVPILKDAHVSHVNGMMAAFGAFIIIGGLLAGWLSDLLGSRSVMLSILFFIRLLSLICLLIPILGIHHSDLWYFGFILLFGLSYTGVIPLTAASISESYQTGLIGSLLGINFFIHQVAGALSVYAGGLFFDMTHGYLLIVAVCIVFVGLSAVIELVPFLDKQKAKETHHSI</sequence>
<comment type="subcellular location">
    <subcellularLocation>
        <location evidence="2">Cell membrane</location>
        <topology evidence="2">Multi-pass membrane protein</topology>
    </subcellularLocation>
</comment>
<comment type="similarity">
    <text evidence="2">Belongs to the major facilitator superfamily.</text>
</comment>
<protein>
    <recommendedName>
        <fullName>Uncharacterized MFS-type transporter YcxA</fullName>
    </recommendedName>
    <alternativeName>
        <fullName>ORF5</fullName>
    </alternativeName>
</protein>
<accession>Q08791</accession>
<name>YCXA_BACSU</name>
<keyword id="KW-1003">Cell membrane</keyword>
<keyword id="KW-0472">Membrane</keyword>
<keyword id="KW-1185">Reference proteome</keyword>
<keyword id="KW-0812">Transmembrane</keyword>
<keyword id="KW-1133">Transmembrane helix</keyword>
<keyword id="KW-0813">Transport</keyword>
<proteinExistence type="inferred from homology"/>